<gene>
    <name evidence="1" type="primary">dut</name>
    <name type="ordered locus">CGSHiEE_07190</name>
</gene>
<dbReference type="EC" id="3.6.1.23" evidence="1"/>
<dbReference type="EMBL" id="CP000671">
    <property type="protein sequence ID" value="ABQ98765.1"/>
    <property type="molecule type" value="Genomic_DNA"/>
</dbReference>
<dbReference type="SMR" id="A5UDB4"/>
<dbReference type="KEGG" id="hip:CGSHiEE_07190"/>
<dbReference type="HOGENOM" id="CLU_068508_1_1_6"/>
<dbReference type="UniPathway" id="UPA00610">
    <property type="reaction ID" value="UER00666"/>
</dbReference>
<dbReference type="GO" id="GO:0004170">
    <property type="term" value="F:dUTP diphosphatase activity"/>
    <property type="evidence" value="ECO:0007669"/>
    <property type="project" value="UniProtKB-UniRule"/>
</dbReference>
<dbReference type="GO" id="GO:0000287">
    <property type="term" value="F:magnesium ion binding"/>
    <property type="evidence" value="ECO:0007669"/>
    <property type="project" value="UniProtKB-UniRule"/>
</dbReference>
<dbReference type="GO" id="GO:0006226">
    <property type="term" value="P:dUMP biosynthetic process"/>
    <property type="evidence" value="ECO:0007669"/>
    <property type="project" value="UniProtKB-UniRule"/>
</dbReference>
<dbReference type="GO" id="GO:0046081">
    <property type="term" value="P:dUTP catabolic process"/>
    <property type="evidence" value="ECO:0007669"/>
    <property type="project" value="InterPro"/>
</dbReference>
<dbReference type="CDD" id="cd07557">
    <property type="entry name" value="trimeric_dUTPase"/>
    <property type="match status" value="1"/>
</dbReference>
<dbReference type="FunFam" id="2.70.40.10:FF:000002">
    <property type="entry name" value="dUTP diphosphatase"/>
    <property type="match status" value="1"/>
</dbReference>
<dbReference type="Gene3D" id="2.70.40.10">
    <property type="match status" value="1"/>
</dbReference>
<dbReference type="HAMAP" id="MF_00116">
    <property type="entry name" value="dUTPase_bact"/>
    <property type="match status" value="1"/>
</dbReference>
<dbReference type="InterPro" id="IPR008181">
    <property type="entry name" value="dUTPase"/>
</dbReference>
<dbReference type="InterPro" id="IPR029054">
    <property type="entry name" value="dUTPase-like"/>
</dbReference>
<dbReference type="InterPro" id="IPR036157">
    <property type="entry name" value="dUTPase-like_sf"/>
</dbReference>
<dbReference type="InterPro" id="IPR033704">
    <property type="entry name" value="dUTPase_trimeric"/>
</dbReference>
<dbReference type="NCBIfam" id="TIGR00576">
    <property type="entry name" value="dut"/>
    <property type="match status" value="1"/>
</dbReference>
<dbReference type="NCBIfam" id="NF001862">
    <property type="entry name" value="PRK00601.1"/>
    <property type="match status" value="1"/>
</dbReference>
<dbReference type="PANTHER" id="PTHR11241">
    <property type="entry name" value="DEOXYURIDINE 5'-TRIPHOSPHATE NUCLEOTIDOHYDROLASE"/>
    <property type="match status" value="1"/>
</dbReference>
<dbReference type="PANTHER" id="PTHR11241:SF0">
    <property type="entry name" value="DEOXYURIDINE 5'-TRIPHOSPHATE NUCLEOTIDOHYDROLASE"/>
    <property type="match status" value="1"/>
</dbReference>
<dbReference type="Pfam" id="PF00692">
    <property type="entry name" value="dUTPase"/>
    <property type="match status" value="1"/>
</dbReference>
<dbReference type="SUPFAM" id="SSF51283">
    <property type="entry name" value="dUTPase-like"/>
    <property type="match status" value="1"/>
</dbReference>
<name>DUT_HAEIE</name>
<accession>A5UDB4</accession>
<protein>
    <recommendedName>
        <fullName evidence="1">Deoxyuridine 5'-triphosphate nucleotidohydrolase</fullName>
        <shortName evidence="1">dUTPase</shortName>
        <ecNumber evidence="1">3.6.1.23</ecNumber>
    </recommendedName>
    <alternativeName>
        <fullName evidence="1">dUTP pyrophosphatase</fullName>
    </alternativeName>
</protein>
<feature type="chain" id="PRO_1000015473" description="Deoxyuridine 5'-triphosphate nucleotidohydrolase">
    <location>
        <begin position="1"/>
        <end position="151"/>
    </location>
</feature>
<feature type="binding site" evidence="1">
    <location>
        <begin position="70"/>
        <end position="72"/>
    </location>
    <ligand>
        <name>substrate</name>
    </ligand>
</feature>
<feature type="binding site" evidence="1">
    <location>
        <position position="83"/>
    </location>
    <ligand>
        <name>substrate</name>
    </ligand>
</feature>
<feature type="binding site" evidence="1">
    <location>
        <begin position="87"/>
        <end position="89"/>
    </location>
    <ligand>
        <name>substrate</name>
    </ligand>
</feature>
<feature type="binding site" evidence="1">
    <location>
        <position position="97"/>
    </location>
    <ligand>
        <name>substrate</name>
    </ligand>
</feature>
<organism>
    <name type="scientific">Haemophilus influenzae (strain PittEE)</name>
    <dbReference type="NCBI Taxonomy" id="374930"/>
    <lineage>
        <taxon>Bacteria</taxon>
        <taxon>Pseudomonadati</taxon>
        <taxon>Pseudomonadota</taxon>
        <taxon>Gammaproteobacteria</taxon>
        <taxon>Pasteurellales</taxon>
        <taxon>Pasteurellaceae</taxon>
        <taxon>Haemophilus</taxon>
    </lineage>
</organism>
<proteinExistence type="inferred from homology"/>
<comment type="function">
    <text evidence="1">This enzyme is involved in nucleotide metabolism: it produces dUMP, the immediate precursor of thymidine nucleotides and it decreases the intracellular concentration of dUTP so that uracil cannot be incorporated into DNA.</text>
</comment>
<comment type="catalytic activity">
    <reaction evidence="1">
        <text>dUTP + H2O = dUMP + diphosphate + H(+)</text>
        <dbReference type="Rhea" id="RHEA:10248"/>
        <dbReference type="ChEBI" id="CHEBI:15377"/>
        <dbReference type="ChEBI" id="CHEBI:15378"/>
        <dbReference type="ChEBI" id="CHEBI:33019"/>
        <dbReference type="ChEBI" id="CHEBI:61555"/>
        <dbReference type="ChEBI" id="CHEBI:246422"/>
        <dbReference type="EC" id="3.6.1.23"/>
    </reaction>
</comment>
<comment type="cofactor">
    <cofactor evidence="1">
        <name>Mg(2+)</name>
        <dbReference type="ChEBI" id="CHEBI:18420"/>
    </cofactor>
</comment>
<comment type="pathway">
    <text evidence="1">Pyrimidine metabolism; dUMP biosynthesis; dUMP from dCTP (dUTP route): step 2/2.</text>
</comment>
<comment type="similarity">
    <text evidence="1">Belongs to the dUTPase family.</text>
</comment>
<keyword id="KW-0378">Hydrolase</keyword>
<keyword id="KW-0460">Magnesium</keyword>
<keyword id="KW-0479">Metal-binding</keyword>
<keyword id="KW-0546">Nucleotide metabolism</keyword>
<sequence length="151" mass="16445">MKKIDVKILDSRIGNEFPLPTYATEGSAGLDLRALIDESFEIQPGETKLIPTGLSIYIADPNLAAVILPRSGLGHKHGIVLGNLVGLIDSDYQGPLMVSMWNRGNEPFKIEVGDRIAQLVFVPVVQAEFNIVEDFQQTERGEGGFGHSGKQ</sequence>
<reference key="1">
    <citation type="journal article" date="2007" name="Genome Biol.">
        <title>Characterization and modeling of the Haemophilus influenzae core and supragenomes based on the complete genomic sequences of Rd and 12 clinical nontypeable strains.</title>
        <authorList>
            <person name="Hogg J.S."/>
            <person name="Hu F.Z."/>
            <person name="Janto B."/>
            <person name="Boissy R."/>
            <person name="Hayes J."/>
            <person name="Keefe R."/>
            <person name="Post J.C."/>
            <person name="Ehrlich G.D."/>
        </authorList>
    </citation>
    <scope>NUCLEOTIDE SEQUENCE [LARGE SCALE GENOMIC DNA]</scope>
    <source>
        <strain>PittEE</strain>
    </source>
</reference>
<evidence type="ECO:0000255" key="1">
    <source>
        <dbReference type="HAMAP-Rule" id="MF_00116"/>
    </source>
</evidence>